<proteinExistence type="inferred from homology"/>
<protein>
    <recommendedName>
        <fullName evidence="1">2-C-methyl-D-erythritol 2,4-cyclodiphosphate synthase</fullName>
        <shortName evidence="1">MECDP-synthase</shortName>
        <shortName evidence="1">MECPP-synthase</shortName>
        <shortName evidence="1">MECPS</shortName>
        <ecNumber evidence="1">4.6.1.12</ecNumber>
    </recommendedName>
</protein>
<comment type="function">
    <text evidence="1">Involved in the biosynthesis of isopentenyl diphosphate (IPP) and dimethylallyl diphosphate (DMAPP), two major building blocks of isoprenoid compounds. Catalyzes the conversion of 4-diphosphocytidyl-2-C-methyl-D-erythritol 2-phosphate (CDP-ME2P) to 2-C-methyl-D-erythritol 2,4-cyclodiphosphate (ME-CPP) with a corresponding release of cytidine 5-monophosphate (CMP).</text>
</comment>
<comment type="catalytic activity">
    <reaction evidence="1">
        <text>4-CDP-2-C-methyl-D-erythritol 2-phosphate = 2-C-methyl-D-erythritol 2,4-cyclic diphosphate + CMP</text>
        <dbReference type="Rhea" id="RHEA:23864"/>
        <dbReference type="ChEBI" id="CHEBI:57919"/>
        <dbReference type="ChEBI" id="CHEBI:58483"/>
        <dbReference type="ChEBI" id="CHEBI:60377"/>
        <dbReference type="EC" id="4.6.1.12"/>
    </reaction>
</comment>
<comment type="cofactor">
    <cofactor evidence="1">
        <name>a divalent metal cation</name>
        <dbReference type="ChEBI" id="CHEBI:60240"/>
    </cofactor>
    <text evidence="1">Binds 1 divalent metal cation per subunit.</text>
</comment>
<comment type="pathway">
    <text evidence="1">Isoprenoid biosynthesis; isopentenyl diphosphate biosynthesis via DXP pathway; isopentenyl diphosphate from 1-deoxy-D-xylulose 5-phosphate: step 4/6.</text>
</comment>
<comment type="subunit">
    <text evidence="1">Homotrimer.</text>
</comment>
<comment type="similarity">
    <text evidence="1">Belongs to the IspF family.</text>
</comment>
<accession>A9VN99</accession>
<sequence>MFRIGQGFDVHEFAEGRPLIIGGITIPHEKGLIGHSDADVLLHTIADACLGAIAAGDIGKHFPDTDPAFKDADSAVLLQKVWEFVREQGYELGNLDCTIIAQKPKMAPHIESMRKRISELLETSIDNINVKATTTEKLGFTGREEGIASQAVVLLQKK</sequence>
<organism>
    <name type="scientific">Bacillus mycoides (strain KBAB4)</name>
    <name type="common">Bacillus weihenstephanensis</name>
    <dbReference type="NCBI Taxonomy" id="315730"/>
    <lineage>
        <taxon>Bacteria</taxon>
        <taxon>Bacillati</taxon>
        <taxon>Bacillota</taxon>
        <taxon>Bacilli</taxon>
        <taxon>Bacillales</taxon>
        <taxon>Bacillaceae</taxon>
        <taxon>Bacillus</taxon>
        <taxon>Bacillus cereus group</taxon>
    </lineage>
</organism>
<keyword id="KW-0414">Isoprene biosynthesis</keyword>
<keyword id="KW-0456">Lyase</keyword>
<keyword id="KW-0479">Metal-binding</keyword>
<name>ISPF_BACMK</name>
<dbReference type="EC" id="4.6.1.12" evidence="1"/>
<dbReference type="EMBL" id="CP000903">
    <property type="protein sequence ID" value="ABY41350.1"/>
    <property type="molecule type" value="Genomic_DNA"/>
</dbReference>
<dbReference type="RefSeq" id="WP_000488386.1">
    <property type="nucleotide sequence ID" value="NC_010184.1"/>
</dbReference>
<dbReference type="SMR" id="A9VN99"/>
<dbReference type="GeneID" id="93010967"/>
<dbReference type="KEGG" id="bwe:BcerKBAB4_0081"/>
<dbReference type="eggNOG" id="COG0245">
    <property type="taxonomic scope" value="Bacteria"/>
</dbReference>
<dbReference type="HOGENOM" id="CLU_084630_2_0_9"/>
<dbReference type="UniPathway" id="UPA00056">
    <property type="reaction ID" value="UER00095"/>
</dbReference>
<dbReference type="Proteomes" id="UP000002154">
    <property type="component" value="Chromosome"/>
</dbReference>
<dbReference type="GO" id="GO:0008685">
    <property type="term" value="F:2-C-methyl-D-erythritol 2,4-cyclodiphosphate synthase activity"/>
    <property type="evidence" value="ECO:0007669"/>
    <property type="project" value="UniProtKB-UniRule"/>
</dbReference>
<dbReference type="GO" id="GO:0046872">
    <property type="term" value="F:metal ion binding"/>
    <property type="evidence" value="ECO:0007669"/>
    <property type="project" value="UniProtKB-KW"/>
</dbReference>
<dbReference type="GO" id="GO:0019288">
    <property type="term" value="P:isopentenyl diphosphate biosynthetic process, methylerythritol 4-phosphate pathway"/>
    <property type="evidence" value="ECO:0007669"/>
    <property type="project" value="UniProtKB-UniRule"/>
</dbReference>
<dbReference type="GO" id="GO:0016114">
    <property type="term" value="P:terpenoid biosynthetic process"/>
    <property type="evidence" value="ECO:0007669"/>
    <property type="project" value="InterPro"/>
</dbReference>
<dbReference type="CDD" id="cd00554">
    <property type="entry name" value="MECDP_synthase"/>
    <property type="match status" value="1"/>
</dbReference>
<dbReference type="FunFam" id="3.30.1330.50:FF:000001">
    <property type="entry name" value="2-C-methyl-D-erythritol 2,4-cyclodiphosphate synthase"/>
    <property type="match status" value="1"/>
</dbReference>
<dbReference type="Gene3D" id="3.30.1330.50">
    <property type="entry name" value="2-C-methyl-D-erythritol 2,4-cyclodiphosphate synthase"/>
    <property type="match status" value="1"/>
</dbReference>
<dbReference type="HAMAP" id="MF_00107">
    <property type="entry name" value="IspF"/>
    <property type="match status" value="1"/>
</dbReference>
<dbReference type="InterPro" id="IPR003526">
    <property type="entry name" value="MECDP_synthase"/>
</dbReference>
<dbReference type="InterPro" id="IPR020555">
    <property type="entry name" value="MECDP_synthase_CS"/>
</dbReference>
<dbReference type="InterPro" id="IPR036571">
    <property type="entry name" value="MECDP_synthase_sf"/>
</dbReference>
<dbReference type="NCBIfam" id="TIGR00151">
    <property type="entry name" value="ispF"/>
    <property type="match status" value="1"/>
</dbReference>
<dbReference type="PANTHER" id="PTHR43181">
    <property type="entry name" value="2-C-METHYL-D-ERYTHRITOL 2,4-CYCLODIPHOSPHATE SYNTHASE, CHLOROPLASTIC"/>
    <property type="match status" value="1"/>
</dbReference>
<dbReference type="PANTHER" id="PTHR43181:SF1">
    <property type="entry name" value="2-C-METHYL-D-ERYTHRITOL 2,4-CYCLODIPHOSPHATE SYNTHASE, CHLOROPLASTIC"/>
    <property type="match status" value="1"/>
</dbReference>
<dbReference type="Pfam" id="PF02542">
    <property type="entry name" value="YgbB"/>
    <property type="match status" value="1"/>
</dbReference>
<dbReference type="SUPFAM" id="SSF69765">
    <property type="entry name" value="IpsF-like"/>
    <property type="match status" value="1"/>
</dbReference>
<dbReference type="PROSITE" id="PS01350">
    <property type="entry name" value="ISPF"/>
    <property type="match status" value="1"/>
</dbReference>
<evidence type="ECO:0000255" key="1">
    <source>
        <dbReference type="HAMAP-Rule" id="MF_00107"/>
    </source>
</evidence>
<feature type="chain" id="PRO_1000094239" description="2-C-methyl-D-erythritol 2,4-cyclodiphosphate synthase">
    <location>
        <begin position="1"/>
        <end position="158"/>
    </location>
</feature>
<feature type="binding site" evidence="1">
    <location>
        <begin position="9"/>
        <end position="11"/>
    </location>
    <ligand>
        <name>4-CDP-2-C-methyl-D-erythritol 2-phosphate</name>
        <dbReference type="ChEBI" id="CHEBI:57919"/>
    </ligand>
</feature>
<feature type="binding site" evidence="1">
    <location>
        <position position="9"/>
    </location>
    <ligand>
        <name>a divalent metal cation</name>
        <dbReference type="ChEBI" id="CHEBI:60240"/>
    </ligand>
</feature>
<feature type="binding site" evidence="1">
    <location>
        <position position="11"/>
    </location>
    <ligand>
        <name>a divalent metal cation</name>
        <dbReference type="ChEBI" id="CHEBI:60240"/>
    </ligand>
</feature>
<feature type="binding site" evidence="1">
    <location>
        <begin position="35"/>
        <end position="36"/>
    </location>
    <ligand>
        <name>4-CDP-2-C-methyl-D-erythritol 2-phosphate</name>
        <dbReference type="ChEBI" id="CHEBI:57919"/>
    </ligand>
</feature>
<feature type="binding site" evidence="1">
    <location>
        <position position="43"/>
    </location>
    <ligand>
        <name>a divalent metal cation</name>
        <dbReference type="ChEBI" id="CHEBI:60240"/>
    </ligand>
</feature>
<feature type="binding site" evidence="1">
    <location>
        <begin position="57"/>
        <end position="59"/>
    </location>
    <ligand>
        <name>4-CDP-2-C-methyl-D-erythritol 2-phosphate</name>
        <dbReference type="ChEBI" id="CHEBI:57919"/>
    </ligand>
</feature>
<feature type="binding site" evidence="1">
    <location>
        <begin position="62"/>
        <end position="66"/>
    </location>
    <ligand>
        <name>4-CDP-2-C-methyl-D-erythritol 2-phosphate</name>
        <dbReference type="ChEBI" id="CHEBI:57919"/>
    </ligand>
</feature>
<feature type="binding site" evidence="1">
    <location>
        <begin position="101"/>
        <end position="107"/>
    </location>
    <ligand>
        <name>4-CDP-2-C-methyl-D-erythritol 2-phosphate</name>
        <dbReference type="ChEBI" id="CHEBI:57919"/>
    </ligand>
</feature>
<feature type="binding site" evidence="1">
    <location>
        <begin position="133"/>
        <end position="136"/>
    </location>
    <ligand>
        <name>4-CDP-2-C-methyl-D-erythritol 2-phosphate</name>
        <dbReference type="ChEBI" id="CHEBI:57919"/>
    </ligand>
</feature>
<feature type="binding site" evidence="1">
    <location>
        <position position="140"/>
    </location>
    <ligand>
        <name>4-CDP-2-C-methyl-D-erythritol 2-phosphate</name>
        <dbReference type="ChEBI" id="CHEBI:57919"/>
    </ligand>
</feature>
<feature type="binding site" evidence="1">
    <location>
        <position position="143"/>
    </location>
    <ligand>
        <name>4-CDP-2-C-methyl-D-erythritol 2-phosphate</name>
        <dbReference type="ChEBI" id="CHEBI:57919"/>
    </ligand>
</feature>
<feature type="site" description="Transition state stabilizer" evidence="1">
    <location>
        <position position="35"/>
    </location>
</feature>
<feature type="site" description="Transition state stabilizer" evidence="1">
    <location>
        <position position="134"/>
    </location>
</feature>
<gene>
    <name evidence="1" type="primary">ispF</name>
    <name type="ordered locus">BcerKBAB4_0081</name>
</gene>
<reference key="1">
    <citation type="journal article" date="2008" name="Chem. Biol. Interact.">
        <title>Extending the Bacillus cereus group genomics to putative food-borne pathogens of different toxicity.</title>
        <authorList>
            <person name="Lapidus A."/>
            <person name="Goltsman E."/>
            <person name="Auger S."/>
            <person name="Galleron N."/>
            <person name="Segurens B."/>
            <person name="Dossat C."/>
            <person name="Land M.L."/>
            <person name="Broussolle V."/>
            <person name="Brillard J."/>
            <person name="Guinebretiere M.-H."/>
            <person name="Sanchis V."/>
            <person name="Nguen-the C."/>
            <person name="Lereclus D."/>
            <person name="Richardson P."/>
            <person name="Wincker P."/>
            <person name="Weissenbach J."/>
            <person name="Ehrlich S.D."/>
            <person name="Sorokin A."/>
        </authorList>
    </citation>
    <scope>NUCLEOTIDE SEQUENCE [LARGE SCALE GENOMIC DNA]</scope>
    <source>
        <strain>KBAB4</strain>
    </source>
</reference>